<evidence type="ECO:0000255" key="1">
    <source>
        <dbReference type="HAMAP-Rule" id="MF_00740"/>
    </source>
</evidence>
<proteinExistence type="inferred from homology"/>
<name>DEOB_STRPI</name>
<accession>B1IAZ8</accession>
<keyword id="KW-0963">Cytoplasm</keyword>
<keyword id="KW-0413">Isomerase</keyword>
<keyword id="KW-0464">Manganese</keyword>
<keyword id="KW-0479">Metal-binding</keyword>
<dbReference type="EC" id="5.4.2.7" evidence="1"/>
<dbReference type="EMBL" id="CP000936">
    <property type="protein sequence ID" value="ACA37494.1"/>
    <property type="molecule type" value="Genomic_DNA"/>
</dbReference>
<dbReference type="RefSeq" id="WP_000033100.1">
    <property type="nucleotide sequence ID" value="NC_010380.1"/>
</dbReference>
<dbReference type="SMR" id="B1IAZ8"/>
<dbReference type="KEGG" id="spv:SPH_0927"/>
<dbReference type="HOGENOM" id="CLU_053861_0_0_9"/>
<dbReference type="UniPathway" id="UPA00002">
    <property type="reaction ID" value="UER00467"/>
</dbReference>
<dbReference type="Proteomes" id="UP000002163">
    <property type="component" value="Chromosome"/>
</dbReference>
<dbReference type="GO" id="GO:0005829">
    <property type="term" value="C:cytosol"/>
    <property type="evidence" value="ECO:0007669"/>
    <property type="project" value="TreeGrafter"/>
</dbReference>
<dbReference type="GO" id="GO:0000287">
    <property type="term" value="F:magnesium ion binding"/>
    <property type="evidence" value="ECO:0007669"/>
    <property type="project" value="InterPro"/>
</dbReference>
<dbReference type="GO" id="GO:0030145">
    <property type="term" value="F:manganese ion binding"/>
    <property type="evidence" value="ECO:0007669"/>
    <property type="project" value="UniProtKB-UniRule"/>
</dbReference>
<dbReference type="GO" id="GO:0008973">
    <property type="term" value="F:phosphopentomutase activity"/>
    <property type="evidence" value="ECO:0007669"/>
    <property type="project" value="UniProtKB-UniRule"/>
</dbReference>
<dbReference type="GO" id="GO:0006018">
    <property type="term" value="P:2-deoxyribose 1-phosphate catabolic process"/>
    <property type="evidence" value="ECO:0007669"/>
    <property type="project" value="UniProtKB-UniRule"/>
</dbReference>
<dbReference type="GO" id="GO:0006015">
    <property type="term" value="P:5-phosphoribose 1-diphosphate biosynthetic process"/>
    <property type="evidence" value="ECO:0007669"/>
    <property type="project" value="UniProtKB-UniPathway"/>
</dbReference>
<dbReference type="GO" id="GO:0043094">
    <property type="term" value="P:metabolic compound salvage"/>
    <property type="evidence" value="ECO:0007669"/>
    <property type="project" value="InterPro"/>
</dbReference>
<dbReference type="GO" id="GO:0009117">
    <property type="term" value="P:nucleotide metabolic process"/>
    <property type="evidence" value="ECO:0007669"/>
    <property type="project" value="InterPro"/>
</dbReference>
<dbReference type="CDD" id="cd16009">
    <property type="entry name" value="PPM"/>
    <property type="match status" value="1"/>
</dbReference>
<dbReference type="FunFam" id="3.30.70.1250:FF:000001">
    <property type="entry name" value="Phosphopentomutase"/>
    <property type="match status" value="1"/>
</dbReference>
<dbReference type="Gene3D" id="3.40.720.10">
    <property type="entry name" value="Alkaline Phosphatase, subunit A"/>
    <property type="match status" value="1"/>
</dbReference>
<dbReference type="Gene3D" id="3.30.70.1250">
    <property type="entry name" value="Phosphopentomutase"/>
    <property type="match status" value="1"/>
</dbReference>
<dbReference type="HAMAP" id="MF_00740">
    <property type="entry name" value="Phosphopentomut"/>
    <property type="match status" value="1"/>
</dbReference>
<dbReference type="InterPro" id="IPR017850">
    <property type="entry name" value="Alkaline_phosphatase_core_sf"/>
</dbReference>
<dbReference type="InterPro" id="IPR010045">
    <property type="entry name" value="DeoB"/>
</dbReference>
<dbReference type="InterPro" id="IPR006124">
    <property type="entry name" value="Metalloenzyme"/>
</dbReference>
<dbReference type="InterPro" id="IPR024052">
    <property type="entry name" value="Phosphopentomutase_DeoB_cap_sf"/>
</dbReference>
<dbReference type="NCBIfam" id="TIGR01696">
    <property type="entry name" value="deoB"/>
    <property type="match status" value="1"/>
</dbReference>
<dbReference type="NCBIfam" id="NF003766">
    <property type="entry name" value="PRK05362.1"/>
    <property type="match status" value="1"/>
</dbReference>
<dbReference type="PANTHER" id="PTHR21110">
    <property type="entry name" value="PHOSPHOPENTOMUTASE"/>
    <property type="match status" value="1"/>
</dbReference>
<dbReference type="PANTHER" id="PTHR21110:SF0">
    <property type="entry name" value="PHOSPHOPENTOMUTASE"/>
    <property type="match status" value="1"/>
</dbReference>
<dbReference type="Pfam" id="PF01676">
    <property type="entry name" value="Metalloenzyme"/>
    <property type="match status" value="1"/>
</dbReference>
<dbReference type="PIRSF" id="PIRSF001491">
    <property type="entry name" value="Ppentomutase"/>
    <property type="match status" value="1"/>
</dbReference>
<dbReference type="SUPFAM" id="SSF53649">
    <property type="entry name" value="Alkaline phosphatase-like"/>
    <property type="match status" value="1"/>
</dbReference>
<dbReference type="SUPFAM" id="SSF143856">
    <property type="entry name" value="DeoB insert domain-like"/>
    <property type="match status" value="1"/>
</dbReference>
<feature type="chain" id="PRO_1000133104" description="Phosphopentomutase">
    <location>
        <begin position="1"/>
        <end position="403"/>
    </location>
</feature>
<feature type="binding site" evidence="1">
    <location>
        <position position="13"/>
    </location>
    <ligand>
        <name>Mn(2+)</name>
        <dbReference type="ChEBI" id="CHEBI:29035"/>
        <label>1</label>
    </ligand>
</feature>
<feature type="binding site" evidence="1">
    <location>
        <position position="298"/>
    </location>
    <ligand>
        <name>Mn(2+)</name>
        <dbReference type="ChEBI" id="CHEBI:29035"/>
        <label>2</label>
    </ligand>
</feature>
<feature type="binding site" evidence="1">
    <location>
        <position position="303"/>
    </location>
    <ligand>
        <name>Mn(2+)</name>
        <dbReference type="ChEBI" id="CHEBI:29035"/>
        <label>2</label>
    </ligand>
</feature>
<feature type="binding site" evidence="1">
    <location>
        <position position="339"/>
    </location>
    <ligand>
        <name>Mn(2+)</name>
        <dbReference type="ChEBI" id="CHEBI:29035"/>
        <label>1</label>
    </ligand>
</feature>
<feature type="binding site" evidence="1">
    <location>
        <position position="340"/>
    </location>
    <ligand>
        <name>Mn(2+)</name>
        <dbReference type="ChEBI" id="CHEBI:29035"/>
        <label>1</label>
    </ligand>
</feature>
<feature type="binding site" evidence="1">
    <location>
        <position position="351"/>
    </location>
    <ligand>
        <name>Mn(2+)</name>
        <dbReference type="ChEBI" id="CHEBI:29035"/>
        <label>2</label>
    </ligand>
</feature>
<reference key="1">
    <citation type="journal article" date="2010" name="Genome Biol.">
        <title>Structure and dynamics of the pan-genome of Streptococcus pneumoniae and closely related species.</title>
        <authorList>
            <person name="Donati C."/>
            <person name="Hiller N.L."/>
            <person name="Tettelin H."/>
            <person name="Muzzi A."/>
            <person name="Croucher N.J."/>
            <person name="Angiuoli S.V."/>
            <person name="Oggioni M."/>
            <person name="Dunning Hotopp J.C."/>
            <person name="Hu F.Z."/>
            <person name="Riley D.R."/>
            <person name="Covacci A."/>
            <person name="Mitchell T.J."/>
            <person name="Bentley S.D."/>
            <person name="Kilian M."/>
            <person name="Ehrlich G.D."/>
            <person name="Rappuoli R."/>
            <person name="Moxon E.R."/>
            <person name="Masignani V."/>
        </authorList>
    </citation>
    <scope>NUCLEOTIDE SEQUENCE [LARGE SCALE GENOMIC DNA]</scope>
    <source>
        <strain>Hungary19A-6</strain>
    </source>
</reference>
<gene>
    <name evidence="1" type="primary">deoB</name>
    <name type="ordered locus">SPH_0927</name>
</gene>
<organism>
    <name type="scientific">Streptococcus pneumoniae (strain Hungary19A-6)</name>
    <dbReference type="NCBI Taxonomy" id="487214"/>
    <lineage>
        <taxon>Bacteria</taxon>
        <taxon>Bacillati</taxon>
        <taxon>Bacillota</taxon>
        <taxon>Bacilli</taxon>
        <taxon>Lactobacillales</taxon>
        <taxon>Streptococcaceae</taxon>
        <taxon>Streptococcus</taxon>
    </lineage>
</organism>
<sequence length="403" mass="44047">MSKFNRIHLVVLDSVGIGAAPDANNFVNAGVPDGASDTLGHISKTVGLNVPNMAKIGLGNIPRETPLKTVAAESNPTGYATKLEEVSLGKDTMTGHWEIMGLNITEPFDTFWNGFPEEILTKIEEFSGRKVIREANKPYSGTAVIDDFGPRQMETGELIIYTSADPVLQIAAHEDIIPLDELYRICEYARSITLERPALLGRIIARPYVGEPGNFTRTANRRDLAVSPFAPTVLDKLNEAGIDTYAVGKINDIFNGAGINHDMGHNKSNSHGIDTLLKTMGLAEFEKGFSFTNLVDFDALYGHRRNAHGYRDCLHEFDERLPEIIAAMRENDLLLITADHGNDPTYAGTDHTREYIPLLAYSPAFKGNGVIPVGHFADISATVADNFGVETAMIGESFLDKLV</sequence>
<protein>
    <recommendedName>
        <fullName evidence="1">Phosphopentomutase</fullName>
        <ecNumber evidence="1">5.4.2.7</ecNumber>
    </recommendedName>
    <alternativeName>
        <fullName evidence="1">Phosphodeoxyribomutase</fullName>
    </alternativeName>
</protein>
<comment type="function">
    <text evidence="1">Isomerase that catalyzes the conversion of deoxy-ribose 1-phosphate (dRib-1-P) and ribose 1-phosphate (Rib-1-P) to deoxy-ribose 5-phosphate (dRib-5-P) and ribose 5-phosphate (Rib-5-P), respectively.</text>
</comment>
<comment type="catalytic activity">
    <reaction evidence="1">
        <text>2-deoxy-alpha-D-ribose 1-phosphate = 2-deoxy-D-ribose 5-phosphate</text>
        <dbReference type="Rhea" id="RHEA:27658"/>
        <dbReference type="ChEBI" id="CHEBI:57259"/>
        <dbReference type="ChEBI" id="CHEBI:62877"/>
        <dbReference type="EC" id="5.4.2.7"/>
    </reaction>
</comment>
<comment type="catalytic activity">
    <reaction evidence="1">
        <text>alpha-D-ribose 1-phosphate = D-ribose 5-phosphate</text>
        <dbReference type="Rhea" id="RHEA:18793"/>
        <dbReference type="ChEBI" id="CHEBI:57720"/>
        <dbReference type="ChEBI" id="CHEBI:78346"/>
        <dbReference type="EC" id="5.4.2.7"/>
    </reaction>
</comment>
<comment type="cofactor">
    <cofactor evidence="1">
        <name>Mn(2+)</name>
        <dbReference type="ChEBI" id="CHEBI:29035"/>
    </cofactor>
    <text evidence="1">Binds 2 manganese ions.</text>
</comment>
<comment type="pathway">
    <text evidence="1">Carbohydrate degradation; 2-deoxy-D-ribose 1-phosphate degradation; D-glyceraldehyde 3-phosphate and acetaldehyde from 2-deoxy-alpha-D-ribose 1-phosphate: step 1/2.</text>
</comment>
<comment type="subcellular location">
    <subcellularLocation>
        <location evidence="1">Cytoplasm</location>
    </subcellularLocation>
</comment>
<comment type="similarity">
    <text evidence="1">Belongs to the phosphopentomutase family.</text>
</comment>